<protein>
    <recommendedName>
        <fullName>Uncharacterized protein CXorf66</fullName>
    </recommendedName>
</protein>
<accession>Q5JRM2</accession>
<comment type="interaction">
    <interactant intactId="EBI-12823659">
        <id>Q5JRM2</id>
    </interactant>
    <interactant intactId="EBI-13059134">
        <id>Q13520</id>
        <label>AQP6</label>
    </interactant>
    <organismsDiffer>false</organismsDiffer>
    <experiments>3</experiments>
</comment>
<comment type="interaction">
    <interactant intactId="EBI-12823659">
        <id>Q5JRM2</id>
    </interactant>
    <interactant intactId="EBI-12092171">
        <id>Q12797-6</id>
        <label>ASPH</label>
    </interactant>
    <organismsDiffer>false</organismsDiffer>
    <experiments>3</experiments>
</comment>
<comment type="interaction">
    <interactant intactId="EBI-12823659">
        <id>Q5JRM2</id>
    </interactant>
    <interactant intactId="EBI-489887">
        <id>P50402</id>
        <label>EMD</label>
    </interactant>
    <organismsDiffer>false</organismsDiffer>
    <experiments>3</experiments>
</comment>
<comment type="interaction">
    <interactant intactId="EBI-12823659">
        <id>Q5JRM2</id>
    </interactant>
    <interactant intactId="EBI-781551">
        <id>Q9Y282</id>
        <label>ERGIC3</label>
    </interactant>
    <organismsDiffer>false</organismsDiffer>
    <experiments>3</experiments>
</comment>
<comment type="interaction">
    <interactant intactId="EBI-12823659">
        <id>Q5JRM2</id>
    </interactant>
    <interactant intactId="EBI-8070286">
        <id>O43561-2</id>
        <label>LAT</label>
    </interactant>
    <organismsDiffer>false</organismsDiffer>
    <experiments>3</experiments>
</comment>
<comment type="interaction">
    <interactant intactId="EBI-12823659">
        <id>Q5JRM2</id>
    </interactant>
    <interactant intactId="EBI-3912424">
        <id>Q8WZA1</id>
        <label>POMGNT1</label>
    </interactant>
    <organismsDiffer>false</organismsDiffer>
    <experiments>3</experiments>
</comment>
<comment type="interaction">
    <interactant intactId="EBI-12823659">
        <id>Q5JRM2</id>
    </interactant>
    <interactant intactId="EBI-2127112">
        <id>Q86TP1</id>
        <label>PRUNE1</label>
    </interactant>
    <organismsDiffer>false</organismsDiffer>
    <experiments>2</experiments>
</comment>
<comment type="interaction">
    <interactant intactId="EBI-12823659">
        <id>Q5JRM2</id>
    </interactant>
    <interactant intactId="EBI-1052363">
        <id>Q9NS64</id>
        <label>RPRM</label>
    </interactant>
    <organismsDiffer>false</organismsDiffer>
    <experiments>3</experiments>
</comment>
<comment type="interaction">
    <interactant intactId="EBI-12823659">
        <id>Q5JRM2</id>
    </interactant>
    <interactant intactId="EBI-10244780">
        <id>Q5QGT7</id>
        <label>RTP2</label>
    </interactant>
    <organismsDiffer>false</organismsDiffer>
    <experiments>3</experiments>
</comment>
<comment type="interaction">
    <interactant intactId="EBI-12823659">
        <id>Q5JRM2</id>
    </interactant>
    <interactant intactId="EBI-12094584">
        <id>O60499-2</id>
        <label>STX10</label>
    </interactant>
    <organismsDiffer>false</organismsDiffer>
    <experiments>3</experiments>
</comment>
<comment type="interaction">
    <interactant intactId="EBI-12823659">
        <id>Q5JRM2</id>
    </interactant>
    <interactant intactId="EBI-6447886">
        <id>Q9Y320</id>
        <label>TMX2</label>
    </interactant>
    <organismsDiffer>false</organismsDiffer>
    <experiments>3</experiments>
</comment>
<comment type="interaction">
    <interactant intactId="EBI-12823659">
        <id>Q5JRM2</id>
    </interactant>
    <interactant intactId="EBI-751210">
        <id>Q96EC8</id>
        <label>YIPF6</label>
    </interactant>
    <organismsDiffer>false</organismsDiffer>
    <experiments>3</experiments>
</comment>
<comment type="subcellular location">
    <subcellularLocation>
        <location evidence="3">Membrane</location>
        <topology evidence="3">Single-pass type I membrane protein</topology>
    </subcellularLocation>
</comment>
<dbReference type="EMBL" id="AL590077">
    <property type="status" value="NOT_ANNOTATED_CDS"/>
    <property type="molecule type" value="Genomic_DNA"/>
</dbReference>
<dbReference type="EMBL" id="BC137148">
    <property type="protein sequence ID" value="AAI37149.1"/>
    <property type="molecule type" value="mRNA"/>
</dbReference>
<dbReference type="EMBL" id="BC137149">
    <property type="protein sequence ID" value="AAI37150.1"/>
    <property type="molecule type" value="mRNA"/>
</dbReference>
<dbReference type="CCDS" id="CCDS35411.1"/>
<dbReference type="RefSeq" id="NP_001013421.1">
    <property type="nucleotide sequence ID" value="NM_001013403.3"/>
</dbReference>
<dbReference type="BioGRID" id="131442">
    <property type="interactions" value="35"/>
</dbReference>
<dbReference type="FunCoup" id="Q5JRM2">
    <property type="interactions" value="6"/>
</dbReference>
<dbReference type="IntAct" id="Q5JRM2">
    <property type="interactions" value="34"/>
</dbReference>
<dbReference type="STRING" id="9606.ENSP00000359571"/>
<dbReference type="GlyCosmos" id="Q5JRM2">
    <property type="glycosylation" value="1 site, No reported glycans"/>
</dbReference>
<dbReference type="GlyGen" id="Q5JRM2">
    <property type="glycosylation" value="2 sites, 1 O-linked glycan (1 site)"/>
</dbReference>
<dbReference type="iPTMnet" id="Q5JRM2"/>
<dbReference type="PhosphoSitePlus" id="Q5JRM2"/>
<dbReference type="BioMuta" id="CXorf66"/>
<dbReference type="DMDM" id="74741872"/>
<dbReference type="MassIVE" id="Q5JRM2"/>
<dbReference type="PaxDb" id="9606-ENSP00000359571"/>
<dbReference type="PeptideAtlas" id="Q5JRM2"/>
<dbReference type="ProteomicsDB" id="63099"/>
<dbReference type="Antibodypedia" id="44987">
    <property type="antibodies" value="40 antibodies from 11 providers"/>
</dbReference>
<dbReference type="DNASU" id="347487"/>
<dbReference type="Ensembl" id="ENST00000370540.2">
    <property type="protein sequence ID" value="ENSP00000359571.1"/>
    <property type="gene ID" value="ENSG00000203933.3"/>
</dbReference>
<dbReference type="GeneID" id="347487"/>
<dbReference type="KEGG" id="hsa:347487"/>
<dbReference type="MANE-Select" id="ENST00000370540.2">
    <property type="protein sequence ID" value="ENSP00000359571.1"/>
    <property type="RefSeq nucleotide sequence ID" value="NM_001013403.3"/>
    <property type="RefSeq protein sequence ID" value="NP_001013421.1"/>
</dbReference>
<dbReference type="UCSC" id="uc004fbb.4">
    <property type="organism name" value="human"/>
</dbReference>
<dbReference type="AGR" id="HGNC:33743"/>
<dbReference type="CTD" id="347487"/>
<dbReference type="GeneCards" id="CXorf66"/>
<dbReference type="HGNC" id="HGNC:33743">
    <property type="gene designation" value="CXorf66"/>
</dbReference>
<dbReference type="HPA" id="ENSG00000203933">
    <property type="expression patterns" value="Tissue enriched (testis)"/>
</dbReference>
<dbReference type="neXtProt" id="NX_Q5JRM2"/>
<dbReference type="OpenTargets" id="ENSG00000203933"/>
<dbReference type="PharmGKB" id="PA164718516"/>
<dbReference type="VEuPathDB" id="HostDB:ENSG00000203933"/>
<dbReference type="eggNOG" id="ENOG502T3E1">
    <property type="taxonomic scope" value="Eukaryota"/>
</dbReference>
<dbReference type="GeneTree" id="ENSGT00390000004226"/>
<dbReference type="HOGENOM" id="CLU_061820_0_0_1"/>
<dbReference type="InParanoid" id="Q5JRM2"/>
<dbReference type="OMA" id="KYYSEVD"/>
<dbReference type="OrthoDB" id="9837811at2759"/>
<dbReference type="PAN-GO" id="Q5JRM2">
    <property type="GO annotations" value="0 GO annotations based on evolutionary models"/>
</dbReference>
<dbReference type="PhylomeDB" id="Q5JRM2"/>
<dbReference type="TreeFam" id="TF352168"/>
<dbReference type="PathwayCommons" id="Q5JRM2"/>
<dbReference type="BioGRID-ORCS" id="347487">
    <property type="hits" value="8 hits in 749 CRISPR screens"/>
</dbReference>
<dbReference type="GenomeRNAi" id="347487"/>
<dbReference type="Pharos" id="Q5JRM2">
    <property type="development level" value="Tdark"/>
</dbReference>
<dbReference type="PRO" id="PR:Q5JRM2"/>
<dbReference type="Proteomes" id="UP000005640">
    <property type="component" value="Chromosome X"/>
</dbReference>
<dbReference type="RNAct" id="Q5JRM2">
    <property type="molecule type" value="protein"/>
</dbReference>
<dbReference type="Bgee" id="ENSG00000203933">
    <property type="expression patterns" value="Expressed in male germ line stem cell (sensu Vertebrata) in testis and 16 other cell types or tissues"/>
</dbReference>
<dbReference type="GO" id="GO:0016020">
    <property type="term" value="C:membrane"/>
    <property type="evidence" value="ECO:0007669"/>
    <property type="project" value="UniProtKB-SubCell"/>
</dbReference>
<dbReference type="InterPro" id="IPR038873">
    <property type="entry name" value="CXorf66"/>
</dbReference>
<dbReference type="PANTHER" id="PTHR37340">
    <property type="entry name" value="GENE 7073-RELATED"/>
    <property type="match status" value="1"/>
</dbReference>
<dbReference type="PANTHER" id="PTHR37340:SF1">
    <property type="entry name" value="GENE 7073-RELATED"/>
    <property type="match status" value="1"/>
</dbReference>
<reference key="1">
    <citation type="journal article" date="2005" name="Nature">
        <title>The DNA sequence of the human X chromosome.</title>
        <authorList>
            <person name="Ross M.T."/>
            <person name="Grafham D.V."/>
            <person name="Coffey A.J."/>
            <person name="Scherer S."/>
            <person name="McLay K."/>
            <person name="Muzny D."/>
            <person name="Platzer M."/>
            <person name="Howell G.R."/>
            <person name="Burrows C."/>
            <person name="Bird C.P."/>
            <person name="Frankish A."/>
            <person name="Lovell F.L."/>
            <person name="Howe K.L."/>
            <person name="Ashurst J.L."/>
            <person name="Fulton R.S."/>
            <person name="Sudbrak R."/>
            <person name="Wen G."/>
            <person name="Jones M.C."/>
            <person name="Hurles M.E."/>
            <person name="Andrews T.D."/>
            <person name="Scott C.E."/>
            <person name="Searle S."/>
            <person name="Ramser J."/>
            <person name="Whittaker A."/>
            <person name="Deadman R."/>
            <person name="Carter N.P."/>
            <person name="Hunt S.E."/>
            <person name="Chen R."/>
            <person name="Cree A."/>
            <person name="Gunaratne P."/>
            <person name="Havlak P."/>
            <person name="Hodgson A."/>
            <person name="Metzker M.L."/>
            <person name="Richards S."/>
            <person name="Scott G."/>
            <person name="Steffen D."/>
            <person name="Sodergren E."/>
            <person name="Wheeler D.A."/>
            <person name="Worley K.C."/>
            <person name="Ainscough R."/>
            <person name="Ambrose K.D."/>
            <person name="Ansari-Lari M.A."/>
            <person name="Aradhya S."/>
            <person name="Ashwell R.I."/>
            <person name="Babbage A.K."/>
            <person name="Bagguley C.L."/>
            <person name="Ballabio A."/>
            <person name="Banerjee R."/>
            <person name="Barker G.E."/>
            <person name="Barlow K.F."/>
            <person name="Barrett I.P."/>
            <person name="Bates K.N."/>
            <person name="Beare D.M."/>
            <person name="Beasley H."/>
            <person name="Beasley O."/>
            <person name="Beck A."/>
            <person name="Bethel G."/>
            <person name="Blechschmidt K."/>
            <person name="Brady N."/>
            <person name="Bray-Allen S."/>
            <person name="Bridgeman A.M."/>
            <person name="Brown A.J."/>
            <person name="Brown M.J."/>
            <person name="Bonnin D."/>
            <person name="Bruford E.A."/>
            <person name="Buhay C."/>
            <person name="Burch P."/>
            <person name="Burford D."/>
            <person name="Burgess J."/>
            <person name="Burrill W."/>
            <person name="Burton J."/>
            <person name="Bye J.M."/>
            <person name="Carder C."/>
            <person name="Carrel L."/>
            <person name="Chako J."/>
            <person name="Chapman J.C."/>
            <person name="Chavez D."/>
            <person name="Chen E."/>
            <person name="Chen G."/>
            <person name="Chen Y."/>
            <person name="Chen Z."/>
            <person name="Chinault C."/>
            <person name="Ciccodicola A."/>
            <person name="Clark S.Y."/>
            <person name="Clarke G."/>
            <person name="Clee C.M."/>
            <person name="Clegg S."/>
            <person name="Clerc-Blankenburg K."/>
            <person name="Clifford K."/>
            <person name="Cobley V."/>
            <person name="Cole C.G."/>
            <person name="Conquer J.S."/>
            <person name="Corby N."/>
            <person name="Connor R.E."/>
            <person name="David R."/>
            <person name="Davies J."/>
            <person name="Davis C."/>
            <person name="Davis J."/>
            <person name="Delgado O."/>
            <person name="Deshazo D."/>
            <person name="Dhami P."/>
            <person name="Ding Y."/>
            <person name="Dinh H."/>
            <person name="Dodsworth S."/>
            <person name="Draper H."/>
            <person name="Dugan-Rocha S."/>
            <person name="Dunham A."/>
            <person name="Dunn M."/>
            <person name="Durbin K.J."/>
            <person name="Dutta I."/>
            <person name="Eades T."/>
            <person name="Ellwood M."/>
            <person name="Emery-Cohen A."/>
            <person name="Errington H."/>
            <person name="Evans K.L."/>
            <person name="Faulkner L."/>
            <person name="Francis F."/>
            <person name="Frankland J."/>
            <person name="Fraser A.E."/>
            <person name="Galgoczy P."/>
            <person name="Gilbert J."/>
            <person name="Gill R."/>
            <person name="Gloeckner G."/>
            <person name="Gregory S.G."/>
            <person name="Gribble S."/>
            <person name="Griffiths C."/>
            <person name="Grocock R."/>
            <person name="Gu Y."/>
            <person name="Gwilliam R."/>
            <person name="Hamilton C."/>
            <person name="Hart E.A."/>
            <person name="Hawes A."/>
            <person name="Heath P.D."/>
            <person name="Heitmann K."/>
            <person name="Hennig S."/>
            <person name="Hernandez J."/>
            <person name="Hinzmann B."/>
            <person name="Ho S."/>
            <person name="Hoffs M."/>
            <person name="Howden P.J."/>
            <person name="Huckle E.J."/>
            <person name="Hume J."/>
            <person name="Hunt P.J."/>
            <person name="Hunt A.R."/>
            <person name="Isherwood J."/>
            <person name="Jacob L."/>
            <person name="Johnson D."/>
            <person name="Jones S."/>
            <person name="de Jong P.J."/>
            <person name="Joseph S.S."/>
            <person name="Keenan S."/>
            <person name="Kelly S."/>
            <person name="Kershaw J.K."/>
            <person name="Khan Z."/>
            <person name="Kioschis P."/>
            <person name="Klages S."/>
            <person name="Knights A.J."/>
            <person name="Kosiura A."/>
            <person name="Kovar-Smith C."/>
            <person name="Laird G.K."/>
            <person name="Langford C."/>
            <person name="Lawlor S."/>
            <person name="Leversha M."/>
            <person name="Lewis L."/>
            <person name="Liu W."/>
            <person name="Lloyd C."/>
            <person name="Lloyd D.M."/>
            <person name="Loulseged H."/>
            <person name="Loveland J.E."/>
            <person name="Lovell J.D."/>
            <person name="Lozado R."/>
            <person name="Lu J."/>
            <person name="Lyne R."/>
            <person name="Ma J."/>
            <person name="Maheshwari M."/>
            <person name="Matthews L.H."/>
            <person name="McDowall J."/>
            <person name="McLaren S."/>
            <person name="McMurray A."/>
            <person name="Meidl P."/>
            <person name="Meitinger T."/>
            <person name="Milne S."/>
            <person name="Miner G."/>
            <person name="Mistry S.L."/>
            <person name="Morgan M."/>
            <person name="Morris S."/>
            <person name="Mueller I."/>
            <person name="Mullikin J.C."/>
            <person name="Nguyen N."/>
            <person name="Nordsiek G."/>
            <person name="Nyakatura G."/>
            <person name="O'dell C.N."/>
            <person name="Okwuonu G."/>
            <person name="Palmer S."/>
            <person name="Pandian R."/>
            <person name="Parker D."/>
            <person name="Parrish J."/>
            <person name="Pasternak S."/>
            <person name="Patel D."/>
            <person name="Pearce A.V."/>
            <person name="Pearson D.M."/>
            <person name="Pelan S.E."/>
            <person name="Perez L."/>
            <person name="Porter K.M."/>
            <person name="Ramsey Y."/>
            <person name="Reichwald K."/>
            <person name="Rhodes S."/>
            <person name="Ridler K.A."/>
            <person name="Schlessinger D."/>
            <person name="Schueler M.G."/>
            <person name="Sehra H.K."/>
            <person name="Shaw-Smith C."/>
            <person name="Shen H."/>
            <person name="Sheridan E.M."/>
            <person name="Shownkeen R."/>
            <person name="Skuce C.D."/>
            <person name="Smith M.L."/>
            <person name="Sotheran E.C."/>
            <person name="Steingruber H.E."/>
            <person name="Steward C.A."/>
            <person name="Storey R."/>
            <person name="Swann R.M."/>
            <person name="Swarbreck D."/>
            <person name="Tabor P.E."/>
            <person name="Taudien S."/>
            <person name="Taylor T."/>
            <person name="Teague B."/>
            <person name="Thomas K."/>
            <person name="Thorpe A."/>
            <person name="Timms K."/>
            <person name="Tracey A."/>
            <person name="Trevanion S."/>
            <person name="Tromans A.C."/>
            <person name="d'Urso M."/>
            <person name="Verduzco D."/>
            <person name="Villasana D."/>
            <person name="Waldron L."/>
            <person name="Wall M."/>
            <person name="Wang Q."/>
            <person name="Warren J."/>
            <person name="Warry G.L."/>
            <person name="Wei X."/>
            <person name="West A."/>
            <person name="Whitehead S.L."/>
            <person name="Whiteley M.N."/>
            <person name="Wilkinson J.E."/>
            <person name="Willey D.L."/>
            <person name="Williams G."/>
            <person name="Williams L."/>
            <person name="Williamson A."/>
            <person name="Williamson H."/>
            <person name="Wilming L."/>
            <person name="Woodmansey R.L."/>
            <person name="Wray P.W."/>
            <person name="Yen J."/>
            <person name="Zhang J."/>
            <person name="Zhou J."/>
            <person name="Zoghbi H."/>
            <person name="Zorilla S."/>
            <person name="Buck D."/>
            <person name="Reinhardt R."/>
            <person name="Poustka A."/>
            <person name="Rosenthal A."/>
            <person name="Lehrach H."/>
            <person name="Meindl A."/>
            <person name="Minx P.J."/>
            <person name="Hillier L.W."/>
            <person name="Willard H.F."/>
            <person name="Wilson R.K."/>
            <person name="Waterston R.H."/>
            <person name="Rice C.M."/>
            <person name="Vaudin M."/>
            <person name="Coulson A."/>
            <person name="Nelson D.L."/>
            <person name="Weinstock G."/>
            <person name="Sulston J.E."/>
            <person name="Durbin R.M."/>
            <person name="Hubbard T."/>
            <person name="Gibbs R.A."/>
            <person name="Beck S."/>
            <person name="Rogers J."/>
            <person name="Bentley D.R."/>
        </authorList>
    </citation>
    <scope>NUCLEOTIDE SEQUENCE [LARGE SCALE GENOMIC DNA]</scope>
</reference>
<reference key="2">
    <citation type="journal article" date="2004" name="Genome Res.">
        <title>The status, quality, and expansion of the NIH full-length cDNA project: the Mammalian Gene Collection (MGC).</title>
        <authorList>
            <consortium name="The MGC Project Team"/>
        </authorList>
    </citation>
    <scope>NUCLEOTIDE SEQUENCE [LARGE SCALE MRNA]</scope>
    <source>
        <tissue>Testis</tissue>
    </source>
</reference>
<organism>
    <name type="scientific">Homo sapiens</name>
    <name type="common">Human</name>
    <dbReference type="NCBI Taxonomy" id="9606"/>
    <lineage>
        <taxon>Eukaryota</taxon>
        <taxon>Metazoa</taxon>
        <taxon>Chordata</taxon>
        <taxon>Craniata</taxon>
        <taxon>Vertebrata</taxon>
        <taxon>Euteleostomi</taxon>
        <taxon>Mammalia</taxon>
        <taxon>Eutheria</taxon>
        <taxon>Euarchontoglires</taxon>
        <taxon>Primates</taxon>
        <taxon>Haplorrhini</taxon>
        <taxon>Catarrhini</taxon>
        <taxon>Hominidae</taxon>
        <taxon>Homo</taxon>
    </lineage>
</organism>
<proteinExistence type="evidence at protein level"/>
<evidence type="ECO:0000255" key="1"/>
<evidence type="ECO:0000256" key="2">
    <source>
        <dbReference type="SAM" id="MobiDB-lite"/>
    </source>
</evidence>
<evidence type="ECO:0000305" key="3"/>
<sequence length="361" mass="39944">MNLVICVLLLSIWKNNCMTTNQTNGSSTTGDKPVESMQTKLNYLRRNLLILVGIIIMVFVFICFCYLHYNCLSDDASKAGMVKKKGIAAKSSKTSFSEAKTASQCSPETQPMLSTADKSSDSSSPERASAQSSTEKLIRPSSLQKPSIPNSAGKLTRPSYPKRSSKSSCSKKLSKSSHLEKAHKKGSLEKLCKLDYACKLASSDKPVRPPQLFKPLYSSHPQNEISPSKPFGPQELAKPPKHFNPKRSVSLGRAALLSNSELAETCQPYKKKHLVAKTYRPLVNDISEAKEKNTQNLHVSSKVKSSSRSFRKLDSRNNAYGDHVNDSDTMKYYSEVDSDKVIIITCDRGYNQVTSEVTLND</sequence>
<keyword id="KW-0325">Glycoprotein</keyword>
<keyword id="KW-0472">Membrane</keyword>
<keyword id="KW-1267">Proteomics identification</keyword>
<keyword id="KW-1185">Reference proteome</keyword>
<keyword id="KW-0732">Signal</keyword>
<keyword id="KW-0812">Transmembrane</keyword>
<keyword id="KW-1133">Transmembrane helix</keyword>
<name>CX066_HUMAN</name>
<gene>
    <name type="primary">CXorf66</name>
</gene>
<feature type="signal peptide" evidence="1">
    <location>
        <begin position="1"/>
        <end position="19"/>
    </location>
</feature>
<feature type="chain" id="PRO_0000348434" description="Uncharacterized protein CXorf66">
    <location>
        <begin position="20"/>
        <end position="361"/>
    </location>
</feature>
<feature type="topological domain" description="Extracellular" evidence="1">
    <location>
        <begin position="20"/>
        <end position="47"/>
    </location>
</feature>
<feature type="transmembrane region" description="Helical" evidence="1">
    <location>
        <begin position="48"/>
        <end position="68"/>
    </location>
</feature>
<feature type="topological domain" description="Cytoplasmic" evidence="1">
    <location>
        <begin position="69"/>
        <end position="361"/>
    </location>
</feature>
<feature type="region of interest" description="Disordered" evidence="2">
    <location>
        <begin position="99"/>
        <end position="184"/>
    </location>
</feature>
<feature type="region of interest" description="Disordered" evidence="2">
    <location>
        <begin position="209"/>
        <end position="247"/>
    </location>
</feature>
<feature type="region of interest" description="Disordered" evidence="2">
    <location>
        <begin position="295"/>
        <end position="316"/>
    </location>
</feature>
<feature type="compositionally biased region" description="Polar residues" evidence="2">
    <location>
        <begin position="99"/>
        <end position="113"/>
    </location>
</feature>
<feature type="compositionally biased region" description="Low complexity" evidence="2">
    <location>
        <begin position="114"/>
        <end position="133"/>
    </location>
</feature>
<feature type="compositionally biased region" description="Polar residues" evidence="2">
    <location>
        <begin position="141"/>
        <end position="150"/>
    </location>
</feature>
<feature type="compositionally biased region" description="Low complexity" evidence="2">
    <location>
        <begin position="299"/>
        <end position="308"/>
    </location>
</feature>
<feature type="glycosylation site" description="N-linked (GlcNAc...) asparagine" evidence="1">
    <location>
        <position position="24"/>
    </location>
</feature>
<feature type="sequence variant" id="VAR_046157" description="In dbSNP:rs5955139.">
    <original>P</original>
    <variation>L</variation>
    <location>
        <position position="233"/>
    </location>
</feature>